<organism>
    <name type="scientific">Shigella sonnei (strain Ss046)</name>
    <dbReference type="NCBI Taxonomy" id="300269"/>
    <lineage>
        <taxon>Bacteria</taxon>
        <taxon>Pseudomonadati</taxon>
        <taxon>Pseudomonadota</taxon>
        <taxon>Gammaproteobacteria</taxon>
        <taxon>Enterobacterales</taxon>
        <taxon>Enterobacteriaceae</taxon>
        <taxon>Shigella</taxon>
    </lineage>
</organism>
<feature type="chain" id="PRO_0000309709" description="Hydroxyacylglutathione hydrolase">
    <location>
        <begin position="1"/>
        <end position="251"/>
    </location>
</feature>
<feature type="binding site" evidence="1">
    <location>
        <position position="53"/>
    </location>
    <ligand>
        <name>Zn(2+)</name>
        <dbReference type="ChEBI" id="CHEBI:29105"/>
        <label>1</label>
    </ligand>
</feature>
<feature type="binding site" evidence="1">
    <location>
        <position position="55"/>
    </location>
    <ligand>
        <name>Zn(2+)</name>
        <dbReference type="ChEBI" id="CHEBI:29105"/>
        <label>1</label>
    </ligand>
</feature>
<feature type="binding site" evidence="1">
    <location>
        <position position="57"/>
    </location>
    <ligand>
        <name>Zn(2+)</name>
        <dbReference type="ChEBI" id="CHEBI:29105"/>
        <label>2</label>
    </ligand>
</feature>
<feature type="binding site" evidence="1">
    <location>
        <position position="58"/>
    </location>
    <ligand>
        <name>Zn(2+)</name>
        <dbReference type="ChEBI" id="CHEBI:29105"/>
        <label>2</label>
    </ligand>
</feature>
<feature type="binding site" evidence="1">
    <location>
        <position position="110"/>
    </location>
    <ligand>
        <name>Zn(2+)</name>
        <dbReference type="ChEBI" id="CHEBI:29105"/>
        <label>1</label>
    </ligand>
</feature>
<feature type="binding site" evidence="1">
    <location>
        <position position="127"/>
    </location>
    <ligand>
        <name>Zn(2+)</name>
        <dbReference type="ChEBI" id="CHEBI:29105"/>
        <label>1</label>
    </ligand>
</feature>
<feature type="binding site" evidence="1">
    <location>
        <position position="127"/>
    </location>
    <ligand>
        <name>Zn(2+)</name>
        <dbReference type="ChEBI" id="CHEBI:29105"/>
        <label>2</label>
    </ligand>
</feature>
<feature type="binding site" evidence="1">
    <location>
        <position position="165"/>
    </location>
    <ligand>
        <name>Zn(2+)</name>
        <dbReference type="ChEBI" id="CHEBI:29105"/>
        <label>2</label>
    </ligand>
</feature>
<proteinExistence type="inferred from homology"/>
<gene>
    <name evidence="1" type="primary">gloB</name>
    <name type="ordered locus">SSON_0226</name>
</gene>
<dbReference type="EC" id="3.1.2.6" evidence="1"/>
<dbReference type="EMBL" id="CP000038">
    <property type="protein sequence ID" value="AAZ87011.1"/>
    <property type="molecule type" value="Genomic_DNA"/>
</dbReference>
<dbReference type="RefSeq" id="WP_001052720.1">
    <property type="nucleotide sequence ID" value="NC_007384.1"/>
</dbReference>
<dbReference type="SMR" id="Q3Z5F1"/>
<dbReference type="GeneID" id="93777211"/>
<dbReference type="KEGG" id="ssn:SSON_0226"/>
<dbReference type="HOGENOM" id="CLU_030571_4_1_6"/>
<dbReference type="UniPathway" id="UPA00619">
    <property type="reaction ID" value="UER00676"/>
</dbReference>
<dbReference type="Proteomes" id="UP000002529">
    <property type="component" value="Chromosome"/>
</dbReference>
<dbReference type="GO" id="GO:0004416">
    <property type="term" value="F:hydroxyacylglutathione hydrolase activity"/>
    <property type="evidence" value="ECO:0007669"/>
    <property type="project" value="UniProtKB-UniRule"/>
</dbReference>
<dbReference type="GO" id="GO:0046872">
    <property type="term" value="F:metal ion binding"/>
    <property type="evidence" value="ECO:0007669"/>
    <property type="project" value="UniProtKB-KW"/>
</dbReference>
<dbReference type="GO" id="GO:0019243">
    <property type="term" value="P:methylglyoxal catabolic process to D-lactate via S-lactoyl-glutathione"/>
    <property type="evidence" value="ECO:0007669"/>
    <property type="project" value="InterPro"/>
</dbReference>
<dbReference type="CDD" id="cd07723">
    <property type="entry name" value="hydroxyacylglutathione_hydrolase_MBL-fold"/>
    <property type="match status" value="1"/>
</dbReference>
<dbReference type="FunFam" id="3.60.15.10:FF:000012">
    <property type="entry name" value="Hydroxyacylglutathione hydrolase"/>
    <property type="match status" value="1"/>
</dbReference>
<dbReference type="Gene3D" id="3.60.15.10">
    <property type="entry name" value="Ribonuclease Z/Hydroxyacylglutathione hydrolase-like"/>
    <property type="match status" value="1"/>
</dbReference>
<dbReference type="HAMAP" id="MF_01374">
    <property type="entry name" value="Glyoxalase_2"/>
    <property type="match status" value="1"/>
</dbReference>
<dbReference type="InterPro" id="IPR035680">
    <property type="entry name" value="Clx_II_MBL"/>
</dbReference>
<dbReference type="InterPro" id="IPR050110">
    <property type="entry name" value="Glyoxalase_II_hydrolase"/>
</dbReference>
<dbReference type="InterPro" id="IPR032282">
    <property type="entry name" value="HAGH_C"/>
</dbReference>
<dbReference type="InterPro" id="IPR017782">
    <property type="entry name" value="Hydroxyacylglutathione_Hdrlase"/>
</dbReference>
<dbReference type="InterPro" id="IPR001279">
    <property type="entry name" value="Metallo-B-lactamas"/>
</dbReference>
<dbReference type="InterPro" id="IPR036866">
    <property type="entry name" value="RibonucZ/Hydroxyglut_hydro"/>
</dbReference>
<dbReference type="NCBIfam" id="TIGR03413">
    <property type="entry name" value="GSH_gloB"/>
    <property type="match status" value="1"/>
</dbReference>
<dbReference type="NCBIfam" id="NF007597">
    <property type="entry name" value="PRK10241.1"/>
    <property type="match status" value="1"/>
</dbReference>
<dbReference type="PANTHER" id="PTHR43705">
    <property type="entry name" value="HYDROXYACYLGLUTATHIONE HYDROLASE"/>
    <property type="match status" value="1"/>
</dbReference>
<dbReference type="PANTHER" id="PTHR43705:SF1">
    <property type="entry name" value="HYDROXYACYLGLUTATHIONE HYDROLASE GLOB"/>
    <property type="match status" value="1"/>
</dbReference>
<dbReference type="Pfam" id="PF16123">
    <property type="entry name" value="HAGH_C"/>
    <property type="match status" value="1"/>
</dbReference>
<dbReference type="Pfam" id="PF00753">
    <property type="entry name" value="Lactamase_B"/>
    <property type="match status" value="1"/>
</dbReference>
<dbReference type="PIRSF" id="PIRSF005457">
    <property type="entry name" value="Glx"/>
    <property type="match status" value="1"/>
</dbReference>
<dbReference type="SMART" id="SM00849">
    <property type="entry name" value="Lactamase_B"/>
    <property type="match status" value="1"/>
</dbReference>
<dbReference type="SUPFAM" id="SSF56281">
    <property type="entry name" value="Metallo-hydrolase/oxidoreductase"/>
    <property type="match status" value="1"/>
</dbReference>
<keyword id="KW-0378">Hydrolase</keyword>
<keyword id="KW-0479">Metal-binding</keyword>
<keyword id="KW-1185">Reference proteome</keyword>
<keyword id="KW-0862">Zinc</keyword>
<comment type="function">
    <text evidence="1">Thiolesterase that catalyzes the hydrolysis of S-D-lactoyl-glutathione to form glutathione and D-lactic acid.</text>
</comment>
<comment type="catalytic activity">
    <reaction evidence="1">
        <text>an S-(2-hydroxyacyl)glutathione + H2O = a 2-hydroxy carboxylate + glutathione + H(+)</text>
        <dbReference type="Rhea" id="RHEA:21864"/>
        <dbReference type="ChEBI" id="CHEBI:15377"/>
        <dbReference type="ChEBI" id="CHEBI:15378"/>
        <dbReference type="ChEBI" id="CHEBI:57925"/>
        <dbReference type="ChEBI" id="CHEBI:58896"/>
        <dbReference type="ChEBI" id="CHEBI:71261"/>
        <dbReference type="EC" id="3.1.2.6"/>
    </reaction>
</comment>
<comment type="cofactor">
    <cofactor evidence="1">
        <name>Zn(2+)</name>
        <dbReference type="ChEBI" id="CHEBI:29105"/>
    </cofactor>
    <text evidence="1">Binds 2 Zn(2+) ions per subunit.</text>
</comment>
<comment type="pathway">
    <text evidence="1">Secondary metabolite metabolism; methylglyoxal degradation; (R)-lactate from methylglyoxal: step 2/2.</text>
</comment>
<comment type="subunit">
    <text evidence="1">Monomer.</text>
</comment>
<comment type="similarity">
    <text evidence="1">Belongs to the metallo-beta-lactamase superfamily. Glyoxalase II family.</text>
</comment>
<protein>
    <recommendedName>
        <fullName evidence="1">Hydroxyacylglutathione hydrolase</fullName>
        <ecNumber evidence="1">3.1.2.6</ecNumber>
    </recommendedName>
    <alternativeName>
        <fullName evidence="1">Glyoxalase II</fullName>
        <shortName evidence="1">Glx II</shortName>
    </alternativeName>
</protein>
<accession>Q3Z5F1</accession>
<evidence type="ECO:0000255" key="1">
    <source>
        <dbReference type="HAMAP-Rule" id="MF_01374"/>
    </source>
</evidence>
<name>GLO2_SHISS</name>
<reference key="1">
    <citation type="journal article" date="2005" name="Nucleic Acids Res.">
        <title>Genome dynamics and diversity of Shigella species, the etiologic agents of bacillary dysentery.</title>
        <authorList>
            <person name="Yang F."/>
            <person name="Yang J."/>
            <person name="Zhang X."/>
            <person name="Chen L."/>
            <person name="Jiang Y."/>
            <person name="Yan Y."/>
            <person name="Tang X."/>
            <person name="Wang J."/>
            <person name="Xiong Z."/>
            <person name="Dong J."/>
            <person name="Xue Y."/>
            <person name="Zhu Y."/>
            <person name="Xu X."/>
            <person name="Sun L."/>
            <person name="Chen S."/>
            <person name="Nie H."/>
            <person name="Peng J."/>
            <person name="Xu J."/>
            <person name="Wang Y."/>
            <person name="Yuan Z."/>
            <person name="Wen Y."/>
            <person name="Yao Z."/>
            <person name="Shen Y."/>
            <person name="Qiang B."/>
            <person name="Hou Y."/>
            <person name="Yu J."/>
            <person name="Jin Q."/>
        </authorList>
    </citation>
    <scope>NUCLEOTIDE SEQUENCE [LARGE SCALE GENOMIC DNA]</scope>
    <source>
        <strain>Ss046</strain>
    </source>
</reference>
<sequence>MNLNSIPAFDDNYIWVLNDEAGRCLIVDPGDAEPVLNAIAANNWQPEAIFLTHHHHDHVGGVKELVEKFPQIVVYGPQETQDKGTTQVVKDGETAFVLGHEFSVIATPGHTLGHICYFSKPYLFCGDTLFSGGCGRLFEGTASQMYQSLNKLSALPDDTLVCCAHEYTLSNMKFALSILPHDLSINDYYRKVKELRAKNQITLPVILKNERQINVFLRTEDIDLINVINEETLLQQPEERFAWLRSKKDRF</sequence>